<proteinExistence type="inferred from homology"/>
<protein>
    <recommendedName>
        <fullName evidence="1">Large ribosomal subunit protein uL3</fullName>
    </recommendedName>
    <alternativeName>
        <fullName evidence="2">50S ribosomal protein L3</fullName>
    </alternativeName>
</protein>
<comment type="function">
    <text evidence="1">One of the primary rRNA binding proteins, it binds directly near the 3'-end of the 23S rRNA, where it nucleates assembly of the 50S subunit.</text>
</comment>
<comment type="subunit">
    <text evidence="1">Part of the 50S ribosomal subunit. Forms a cluster with proteins L14 and L19.</text>
</comment>
<comment type="PTM">
    <text evidence="1">Methylated by PrmB.</text>
</comment>
<comment type="similarity">
    <text evidence="1">Belongs to the universal ribosomal protein uL3 family.</text>
</comment>
<name>RL3_GRABC</name>
<reference key="1">
    <citation type="journal article" date="2007" name="J. Bacteriol.">
        <title>Genome sequence analysis of the emerging human pathogenic acetic acid bacterium Granulibacter bethesdensis.</title>
        <authorList>
            <person name="Greenberg D.E."/>
            <person name="Porcella S.F."/>
            <person name="Zelazny A.M."/>
            <person name="Virtaneva K."/>
            <person name="Sturdevant D.E."/>
            <person name="Kupko J.J. III"/>
            <person name="Barbian K.D."/>
            <person name="Babar A."/>
            <person name="Dorward D.W."/>
            <person name="Holland S.M."/>
        </authorList>
    </citation>
    <scope>NUCLEOTIDE SEQUENCE [LARGE SCALE GENOMIC DNA]</scope>
    <source>
        <strain>ATCC BAA-1260 / CGDNIH1</strain>
    </source>
</reference>
<feature type="chain" id="PRO_1000052056" description="Large ribosomal subunit protein uL3">
    <location>
        <begin position="1"/>
        <end position="231"/>
    </location>
</feature>
<feature type="modified residue" description="N5-methylglutamine" evidence="1">
    <location>
        <position position="151"/>
    </location>
</feature>
<accession>Q0BUQ0</accession>
<gene>
    <name evidence="1" type="primary">rplC</name>
    <name type="ordered locus">GbCGDNIH1_0554</name>
</gene>
<evidence type="ECO:0000255" key="1">
    <source>
        <dbReference type="HAMAP-Rule" id="MF_01325"/>
    </source>
</evidence>
<evidence type="ECO:0000305" key="2"/>
<dbReference type="EMBL" id="CP000394">
    <property type="protein sequence ID" value="ABI61452.1"/>
    <property type="molecule type" value="Genomic_DNA"/>
</dbReference>
<dbReference type="RefSeq" id="WP_011631261.1">
    <property type="nucleotide sequence ID" value="NC_008343.2"/>
</dbReference>
<dbReference type="SMR" id="Q0BUQ0"/>
<dbReference type="STRING" id="391165.GbCGDNIH1_0554"/>
<dbReference type="KEGG" id="gbe:GbCGDNIH1_0554"/>
<dbReference type="eggNOG" id="COG0087">
    <property type="taxonomic scope" value="Bacteria"/>
</dbReference>
<dbReference type="HOGENOM" id="CLU_044142_2_0_5"/>
<dbReference type="OrthoDB" id="9806135at2"/>
<dbReference type="Proteomes" id="UP000001963">
    <property type="component" value="Chromosome"/>
</dbReference>
<dbReference type="GO" id="GO:0022625">
    <property type="term" value="C:cytosolic large ribosomal subunit"/>
    <property type="evidence" value="ECO:0007669"/>
    <property type="project" value="TreeGrafter"/>
</dbReference>
<dbReference type="GO" id="GO:0019843">
    <property type="term" value="F:rRNA binding"/>
    <property type="evidence" value="ECO:0007669"/>
    <property type="project" value="UniProtKB-UniRule"/>
</dbReference>
<dbReference type="GO" id="GO:0003735">
    <property type="term" value="F:structural constituent of ribosome"/>
    <property type="evidence" value="ECO:0007669"/>
    <property type="project" value="InterPro"/>
</dbReference>
<dbReference type="GO" id="GO:0006412">
    <property type="term" value="P:translation"/>
    <property type="evidence" value="ECO:0007669"/>
    <property type="project" value="UniProtKB-UniRule"/>
</dbReference>
<dbReference type="FunFam" id="2.40.30.10:FF:000004">
    <property type="entry name" value="50S ribosomal protein L3"/>
    <property type="match status" value="1"/>
</dbReference>
<dbReference type="FunFam" id="3.30.160.810:FF:000001">
    <property type="entry name" value="50S ribosomal protein L3"/>
    <property type="match status" value="1"/>
</dbReference>
<dbReference type="Gene3D" id="3.30.160.810">
    <property type="match status" value="1"/>
</dbReference>
<dbReference type="Gene3D" id="2.40.30.10">
    <property type="entry name" value="Translation factors"/>
    <property type="match status" value="1"/>
</dbReference>
<dbReference type="HAMAP" id="MF_01325_B">
    <property type="entry name" value="Ribosomal_uL3_B"/>
    <property type="match status" value="1"/>
</dbReference>
<dbReference type="InterPro" id="IPR000597">
    <property type="entry name" value="Ribosomal_uL3"/>
</dbReference>
<dbReference type="InterPro" id="IPR019927">
    <property type="entry name" value="Ribosomal_uL3_bac/org-type"/>
</dbReference>
<dbReference type="InterPro" id="IPR019926">
    <property type="entry name" value="Ribosomal_uL3_CS"/>
</dbReference>
<dbReference type="InterPro" id="IPR009000">
    <property type="entry name" value="Transl_B-barrel_sf"/>
</dbReference>
<dbReference type="NCBIfam" id="TIGR03625">
    <property type="entry name" value="L3_bact"/>
    <property type="match status" value="1"/>
</dbReference>
<dbReference type="PANTHER" id="PTHR11229">
    <property type="entry name" value="50S RIBOSOMAL PROTEIN L3"/>
    <property type="match status" value="1"/>
</dbReference>
<dbReference type="PANTHER" id="PTHR11229:SF16">
    <property type="entry name" value="LARGE RIBOSOMAL SUBUNIT PROTEIN UL3C"/>
    <property type="match status" value="1"/>
</dbReference>
<dbReference type="Pfam" id="PF00297">
    <property type="entry name" value="Ribosomal_L3"/>
    <property type="match status" value="1"/>
</dbReference>
<dbReference type="SUPFAM" id="SSF50447">
    <property type="entry name" value="Translation proteins"/>
    <property type="match status" value="1"/>
</dbReference>
<dbReference type="PROSITE" id="PS00474">
    <property type="entry name" value="RIBOSOMAL_L3"/>
    <property type="match status" value="1"/>
</dbReference>
<sequence length="231" mass="24835">MRTGLIARKLGMTRLFKEDGTHVPVTVLHLDQVQVVDTRTKERDGYTAVQLGFGQAKPKHVSKANKGHFARVKVEPKKKLVEFRVAEDAILEPGATLSAEHFLVGQKVDVTGTSKGKGFAGAMKRWNFAGLEASHGVSISHRSHGSTGNRQDPGKTFKNKKMAGHLGDERVTTQNVEVAHVDAARGLLMIRGSIPGAKGGYVLVRDAVKRKRPEGVAYPAALQADAAASEG</sequence>
<keyword id="KW-0488">Methylation</keyword>
<keyword id="KW-1185">Reference proteome</keyword>
<keyword id="KW-0687">Ribonucleoprotein</keyword>
<keyword id="KW-0689">Ribosomal protein</keyword>
<keyword id="KW-0694">RNA-binding</keyword>
<keyword id="KW-0699">rRNA-binding</keyword>
<organism>
    <name type="scientific">Granulibacter bethesdensis (strain ATCC BAA-1260 / CGDNIH1)</name>
    <dbReference type="NCBI Taxonomy" id="391165"/>
    <lineage>
        <taxon>Bacteria</taxon>
        <taxon>Pseudomonadati</taxon>
        <taxon>Pseudomonadota</taxon>
        <taxon>Alphaproteobacteria</taxon>
        <taxon>Acetobacterales</taxon>
        <taxon>Acetobacteraceae</taxon>
        <taxon>Granulibacter</taxon>
    </lineage>
</organism>